<reference key="1">
    <citation type="submission" date="1997-08" db="EMBL/GenBank/DDBJ databases">
        <title>Arabidopsis thaliana putative amino acid or GABA permease mRNA.</title>
        <authorList>
            <person name="Turano F.J."/>
            <person name="Thakkar S.S."/>
        </authorList>
    </citation>
    <scope>NUCLEOTIDE SEQUENCE [MRNA]</scope>
    <source>
        <strain>cv. Columbia</strain>
    </source>
</reference>
<reference key="2">
    <citation type="journal article" date="1999" name="Nature">
        <title>Sequence and analysis of chromosome 2 of the plant Arabidopsis thaliana.</title>
        <authorList>
            <person name="Lin X."/>
            <person name="Kaul S."/>
            <person name="Rounsley S.D."/>
            <person name="Shea T.P."/>
            <person name="Benito M.-I."/>
            <person name="Town C.D."/>
            <person name="Fujii C.Y."/>
            <person name="Mason T.M."/>
            <person name="Bowman C.L."/>
            <person name="Barnstead M.E."/>
            <person name="Feldblyum T.V."/>
            <person name="Buell C.R."/>
            <person name="Ketchum K.A."/>
            <person name="Lee J.J."/>
            <person name="Ronning C.M."/>
            <person name="Koo H.L."/>
            <person name="Moffat K.S."/>
            <person name="Cronin L.A."/>
            <person name="Shen M."/>
            <person name="Pai G."/>
            <person name="Van Aken S."/>
            <person name="Umayam L."/>
            <person name="Tallon L.J."/>
            <person name="Gill J.E."/>
            <person name="Adams M.D."/>
            <person name="Carrera A.J."/>
            <person name="Creasy T.H."/>
            <person name="Goodman H.M."/>
            <person name="Somerville C.R."/>
            <person name="Copenhaver G.P."/>
            <person name="Preuss D."/>
            <person name="Nierman W.C."/>
            <person name="White O."/>
            <person name="Eisen J.A."/>
            <person name="Salzberg S.L."/>
            <person name="Fraser C.M."/>
            <person name="Venter J.C."/>
        </authorList>
    </citation>
    <scope>NUCLEOTIDE SEQUENCE [LARGE SCALE GENOMIC DNA]</scope>
    <source>
        <strain>cv. Columbia</strain>
    </source>
</reference>
<reference key="3">
    <citation type="journal article" date="2017" name="Plant J.">
        <title>Araport11: a complete reannotation of the Arabidopsis thaliana reference genome.</title>
        <authorList>
            <person name="Cheng C.Y."/>
            <person name="Krishnakumar V."/>
            <person name="Chan A.P."/>
            <person name="Thibaud-Nissen F."/>
            <person name="Schobel S."/>
            <person name="Town C.D."/>
        </authorList>
    </citation>
    <scope>GENOME REANNOTATION</scope>
    <source>
        <strain>cv. Columbia</strain>
    </source>
</reference>
<reference key="4">
    <citation type="journal article" date="2003" name="Science">
        <title>Empirical analysis of transcriptional activity in the Arabidopsis genome.</title>
        <authorList>
            <person name="Yamada K."/>
            <person name="Lim J."/>
            <person name="Dale J.M."/>
            <person name="Chen H."/>
            <person name="Shinn P."/>
            <person name="Palm C.J."/>
            <person name="Southwick A.M."/>
            <person name="Wu H.C."/>
            <person name="Kim C.J."/>
            <person name="Nguyen M."/>
            <person name="Pham P.K."/>
            <person name="Cheuk R.F."/>
            <person name="Karlin-Newmann G."/>
            <person name="Liu S.X."/>
            <person name="Lam B."/>
            <person name="Sakano H."/>
            <person name="Wu T."/>
            <person name="Yu G."/>
            <person name="Miranda M."/>
            <person name="Quach H.L."/>
            <person name="Tripp M."/>
            <person name="Chang C.H."/>
            <person name="Lee J.M."/>
            <person name="Toriumi M.J."/>
            <person name="Chan M.M."/>
            <person name="Tang C.C."/>
            <person name="Onodera C.S."/>
            <person name="Deng J.M."/>
            <person name="Akiyama K."/>
            <person name="Ansari Y."/>
            <person name="Arakawa T."/>
            <person name="Banh J."/>
            <person name="Banno F."/>
            <person name="Bowser L."/>
            <person name="Brooks S.Y."/>
            <person name="Carninci P."/>
            <person name="Chao Q."/>
            <person name="Choy N."/>
            <person name="Enju A."/>
            <person name="Goldsmith A.D."/>
            <person name="Gurjal M."/>
            <person name="Hansen N.F."/>
            <person name="Hayashizaki Y."/>
            <person name="Johnson-Hopson C."/>
            <person name="Hsuan V.W."/>
            <person name="Iida K."/>
            <person name="Karnes M."/>
            <person name="Khan S."/>
            <person name="Koesema E."/>
            <person name="Ishida J."/>
            <person name="Jiang P.X."/>
            <person name="Jones T."/>
            <person name="Kawai J."/>
            <person name="Kamiya A."/>
            <person name="Meyers C."/>
            <person name="Nakajima M."/>
            <person name="Narusaka M."/>
            <person name="Seki M."/>
            <person name="Sakurai T."/>
            <person name="Satou M."/>
            <person name="Tamse R."/>
            <person name="Vaysberg M."/>
            <person name="Wallender E.K."/>
            <person name="Wong C."/>
            <person name="Yamamura Y."/>
            <person name="Yuan S."/>
            <person name="Shinozaki K."/>
            <person name="Davis R.W."/>
            <person name="Theologis A."/>
            <person name="Ecker J.R."/>
        </authorList>
    </citation>
    <scope>NUCLEOTIDE SEQUENCE [LARGE SCALE MRNA]</scope>
    <source>
        <strain>cv. Columbia</strain>
    </source>
</reference>
<reference key="5">
    <citation type="journal article" date="2009" name="Planta">
        <title>BAT1, a bidirectional amino acid transporter in Arabidopsis.</title>
        <authorList>
            <person name="Duendar E."/>
            <person name="Bush D.R."/>
        </authorList>
    </citation>
    <scope>FUNCTION</scope>
    <scope>TISSUE SPECIFICITY</scope>
</reference>
<reference key="6">
    <citation type="journal article" date="2011" name="Plant J.">
        <title>A mitochondrial GABA permease connects the GABA shunt and the TCA cycle, and is essential for normal carbon metabolism.</title>
        <authorList>
            <person name="Michaeli S."/>
            <person name="Fait A."/>
            <person name="Lagor K."/>
            <person name="Nunes-Nesi A."/>
            <person name="Grillich N."/>
            <person name="Yellin A."/>
            <person name="Bar D."/>
            <person name="Khan M."/>
            <person name="Fernie A.R."/>
            <person name="Turano F.J."/>
            <person name="Fromm H."/>
        </authorList>
    </citation>
    <scope>FUNCTION</scope>
    <scope>SUBCELLULAR LOCATION</scope>
    <scope>DISRUPTION PHENOTYPE</scope>
</reference>
<proteinExistence type="evidence at transcript level"/>
<evidence type="ECO:0000255" key="1"/>
<evidence type="ECO:0000269" key="2">
    <source>
    </source>
</evidence>
<evidence type="ECO:0000269" key="3">
    <source>
    </source>
</evidence>
<evidence type="ECO:0000305" key="4"/>
<evidence type="ECO:0000305" key="5">
    <source>
    </source>
</evidence>
<sequence>MGLGGDQSFVPVMDSGQVRLKELGYKQELKRDLSVFSNFAISFSIISVLTGITTTYNTGLRFGGTVTLVYGWFLAGSFTMCVGLSMAEICSSYPTSGGLYYWSAMLAGPRWAPLASWMTGWFNIVGQWAVTASVDFSLAQLIQVIVLLSTGGRNGGGYKGSDFVVIGIHGGILFIHALLNSLPISVLSFIGQLAALWNLLGVLVLMILIPLVSTERATTKFVFTNFNTDNGLGITSYAYIFVLGLLMSQYTITGYDASAHMTEETVDADKNGPRGIISAIGISILFGWGYILGISYAVTDIPSLLSETNNSGGYAIAEIFYLAFKNRFGSGTGGIVCLGVVAVAVFFCGMSSVTSNSRMAYAFSRDGAMPMSPLWHKVNSREVPINAVWLSALISFCMALTSLGSIVAFQAMVSIATIGLYIAYAIPIILRVTLARNTFVPGPFSLGKYGMVVGWVAVLWVVTISVLFSLPVAYPITAETLNYTPVAVAGLVAITLSYWLFSARHWFTGPISNILS</sequence>
<dbReference type="EMBL" id="AF019637">
    <property type="protein sequence ID" value="AAB71542.1"/>
    <property type="molecule type" value="mRNA"/>
</dbReference>
<dbReference type="EMBL" id="AC006200">
    <property type="protein sequence ID" value="AAD14517.2"/>
    <property type="molecule type" value="Genomic_DNA"/>
</dbReference>
<dbReference type="EMBL" id="CP002685">
    <property type="protein sequence ID" value="AEC05409.1"/>
    <property type="molecule type" value="Genomic_DNA"/>
</dbReference>
<dbReference type="EMBL" id="AY080610">
    <property type="protein sequence ID" value="AAL86294.1"/>
    <property type="molecule type" value="mRNA"/>
</dbReference>
<dbReference type="PIR" id="D84421">
    <property type="entry name" value="D84421"/>
</dbReference>
<dbReference type="RefSeq" id="NP_565254.1">
    <molecule id="Q9ZU50-1"/>
    <property type="nucleotide sequence ID" value="NM_126178.4"/>
</dbReference>
<dbReference type="SMR" id="Q9ZU50"/>
<dbReference type="FunCoup" id="Q9ZU50">
    <property type="interactions" value="83"/>
</dbReference>
<dbReference type="STRING" id="3702.Q9ZU50"/>
<dbReference type="PaxDb" id="3702-AT2G01170.1"/>
<dbReference type="ProteomicsDB" id="240718">
    <molecule id="Q9ZU50-1"/>
</dbReference>
<dbReference type="EnsemblPlants" id="AT2G01170.1">
    <molecule id="Q9ZU50-1"/>
    <property type="protein sequence ID" value="AT2G01170.1"/>
    <property type="gene ID" value="AT2G01170"/>
</dbReference>
<dbReference type="GeneID" id="814645"/>
<dbReference type="Gramene" id="AT2G01170.1">
    <molecule id="Q9ZU50-1"/>
    <property type="protein sequence ID" value="AT2G01170.1"/>
    <property type="gene ID" value="AT2G01170"/>
</dbReference>
<dbReference type="KEGG" id="ath:AT2G01170"/>
<dbReference type="Araport" id="AT2G01170"/>
<dbReference type="TAIR" id="AT2G01170">
    <property type="gene designation" value="BAT1"/>
</dbReference>
<dbReference type="eggNOG" id="KOG1289">
    <property type="taxonomic scope" value="Eukaryota"/>
</dbReference>
<dbReference type="HOGENOM" id="CLU_004495_0_2_1"/>
<dbReference type="InParanoid" id="Q9ZU50"/>
<dbReference type="OMA" id="AFGVKLM"/>
<dbReference type="OrthoDB" id="3257095at2759"/>
<dbReference type="PhylomeDB" id="Q9ZU50"/>
<dbReference type="PRO" id="PR:Q9ZU50"/>
<dbReference type="Proteomes" id="UP000006548">
    <property type="component" value="Chromosome 2"/>
</dbReference>
<dbReference type="ExpressionAtlas" id="Q9ZU50">
    <property type="expression patterns" value="baseline and differential"/>
</dbReference>
<dbReference type="GO" id="GO:0031966">
    <property type="term" value="C:mitochondrial membrane"/>
    <property type="evidence" value="ECO:0007669"/>
    <property type="project" value="UniProtKB-SubCell"/>
</dbReference>
<dbReference type="GO" id="GO:0005739">
    <property type="term" value="C:mitochondrion"/>
    <property type="evidence" value="ECO:0000314"/>
    <property type="project" value="TAIR"/>
</dbReference>
<dbReference type="GO" id="GO:0015185">
    <property type="term" value="F:gamma-aminobutyric acid transmembrane transporter activity"/>
    <property type="evidence" value="ECO:0000315"/>
    <property type="project" value="TAIR"/>
</dbReference>
<dbReference type="GO" id="GO:0015180">
    <property type="term" value="F:L-alanine transmembrane transporter activity"/>
    <property type="evidence" value="ECO:0000314"/>
    <property type="project" value="TAIR"/>
</dbReference>
<dbReference type="GO" id="GO:0005313">
    <property type="term" value="F:L-glutamate transmembrane transporter activity"/>
    <property type="evidence" value="ECO:0000314"/>
    <property type="project" value="TAIR"/>
</dbReference>
<dbReference type="GO" id="GO:0015189">
    <property type="term" value="F:L-lysine transmembrane transporter activity"/>
    <property type="evidence" value="ECO:0000314"/>
    <property type="project" value="TAIR"/>
</dbReference>
<dbReference type="GO" id="GO:0015812">
    <property type="term" value="P:gamma-aminobutyric acid transport"/>
    <property type="evidence" value="ECO:0000315"/>
    <property type="project" value="TAIR"/>
</dbReference>
<dbReference type="FunFam" id="1.20.1740.10:FF:000026">
    <property type="entry name" value="Amino-acid permease BAT1"/>
    <property type="match status" value="1"/>
</dbReference>
<dbReference type="Gene3D" id="1.20.1740.10">
    <property type="entry name" value="Amino acid/polyamine transporter I"/>
    <property type="match status" value="1"/>
</dbReference>
<dbReference type="InterPro" id="IPR002293">
    <property type="entry name" value="AA/rel_permease1"/>
</dbReference>
<dbReference type="InterPro" id="IPR004756">
    <property type="entry name" value="AA_permease"/>
</dbReference>
<dbReference type="NCBIfam" id="TIGR00907">
    <property type="entry name" value="2A0304"/>
    <property type="match status" value="1"/>
</dbReference>
<dbReference type="PANTHER" id="PTHR45649">
    <property type="entry name" value="AMINO-ACID PERMEASE BAT1"/>
    <property type="match status" value="1"/>
</dbReference>
<dbReference type="PANTHER" id="PTHR45649:SF30">
    <property type="entry name" value="AMINO-ACID PERMEASE BAT1"/>
    <property type="match status" value="1"/>
</dbReference>
<dbReference type="Pfam" id="PF13520">
    <property type="entry name" value="AA_permease_2"/>
    <property type="match status" value="1"/>
</dbReference>
<dbReference type="PIRSF" id="PIRSF006060">
    <property type="entry name" value="AA_transporter"/>
    <property type="match status" value="1"/>
</dbReference>
<feature type="chain" id="PRO_0000418906" description="Amino-acid permease BAT1">
    <location>
        <begin position="1"/>
        <end position="516"/>
    </location>
</feature>
<feature type="transmembrane region" description="Helical" evidence="1">
    <location>
        <begin position="33"/>
        <end position="53"/>
    </location>
</feature>
<feature type="transmembrane region" description="Helical" evidence="1">
    <location>
        <begin position="70"/>
        <end position="90"/>
    </location>
</feature>
<feature type="transmembrane region" description="Helical" evidence="1">
    <location>
        <begin position="113"/>
        <end position="133"/>
    </location>
</feature>
<feature type="transmembrane region" description="Helical" evidence="1">
    <location>
        <begin position="164"/>
        <end position="184"/>
    </location>
</feature>
<feature type="transmembrane region" description="Helical" evidence="1">
    <location>
        <begin position="189"/>
        <end position="209"/>
    </location>
</feature>
<feature type="transmembrane region" description="Helical" evidence="1">
    <location>
        <begin position="232"/>
        <end position="252"/>
    </location>
</feature>
<feature type="transmembrane region" description="Helical" evidence="1">
    <location>
        <begin position="275"/>
        <end position="295"/>
    </location>
</feature>
<feature type="transmembrane region" description="Helical" evidence="1">
    <location>
        <begin position="328"/>
        <end position="348"/>
    </location>
</feature>
<feature type="transmembrane region" description="Helical" evidence="1">
    <location>
        <begin position="383"/>
        <end position="403"/>
    </location>
</feature>
<feature type="transmembrane region" description="Helical" evidence="1">
    <location>
        <begin position="406"/>
        <end position="426"/>
    </location>
</feature>
<feature type="transmembrane region" description="Helical" evidence="1">
    <location>
        <begin position="452"/>
        <end position="472"/>
    </location>
</feature>
<feature type="transmembrane region" description="Helical" evidence="1">
    <location>
        <begin position="483"/>
        <end position="503"/>
    </location>
</feature>
<feature type="sequence conflict" description="In Ref. 4; AAL86294." evidence="4" ref="4">
    <original>V</original>
    <variation>I</variation>
    <location>
        <position position="340"/>
    </location>
</feature>
<accession>Q9ZU50</accession>
<accession>O22509</accession>
<accession>Q8RXY5</accession>
<comment type="function">
    <text evidence="2 3">May play a role in primary carbon metabolism and plant growth, by mediating the transport of GABA from the cytosol to mitochondria. When expressed in a heterologous system (yeast), imports Arg and Ala across the plasma membrane and exports Lys and Glu, but does not transport proline.</text>
</comment>
<comment type="subcellular location">
    <subcellularLocation>
        <location evidence="5">Mitochondrion membrane</location>
        <topology evidence="5">Multi-pass membrane protein</topology>
    </subcellularLocation>
</comment>
<comment type="alternative products">
    <event type="alternative splicing"/>
    <isoform>
        <id>Q9ZU50-1</id>
        <name>1</name>
        <sequence type="displayed"/>
    </isoform>
    <text>A number of isoforms are produced. According to EST sequences.</text>
</comment>
<comment type="tissue specificity">
    <text evidence="2">Expressed in roots, rosette leaves, stems, cauline leaves, flowers and siliques.</text>
</comment>
<comment type="disruption phenotype">
    <text evidence="3">No visible phenotype under normal growth conditions, but mutant plants grown on medium without sucrose show strong decrease in root growth and plants grown on soil under low light intensity have reduced rosette leaf expansion.</text>
</comment>
<comment type="similarity">
    <text evidence="4">Belongs to the amino acid-polyamine-organocation (APC) superfamily. Amino acid/choline transporter (ACT) (TC 2.A.3.4) family.</text>
</comment>
<name>BAT1_ARATH</name>
<protein>
    <recommendedName>
        <fullName>Amino-acid permease BAT1</fullName>
    </recommendedName>
    <alternativeName>
        <fullName>Bidirectional amino acid transporter 1</fullName>
    </alternativeName>
    <alternativeName>
        <fullName>GABA permease</fullName>
        <shortName>AtGABP</shortName>
    </alternativeName>
</protein>
<keyword id="KW-0025">Alternative splicing</keyword>
<keyword id="KW-0029">Amino-acid transport</keyword>
<keyword id="KW-0472">Membrane</keyword>
<keyword id="KW-0496">Mitochondrion</keyword>
<keyword id="KW-1185">Reference proteome</keyword>
<keyword id="KW-0812">Transmembrane</keyword>
<keyword id="KW-1133">Transmembrane helix</keyword>
<keyword id="KW-0813">Transport</keyword>
<gene>
    <name type="primary">BAT1</name>
    <name type="synonym">GABP</name>
    <name type="ordered locus">At2g01170</name>
    <name type="ORF">F10A8.5</name>
</gene>
<organism>
    <name type="scientific">Arabidopsis thaliana</name>
    <name type="common">Mouse-ear cress</name>
    <dbReference type="NCBI Taxonomy" id="3702"/>
    <lineage>
        <taxon>Eukaryota</taxon>
        <taxon>Viridiplantae</taxon>
        <taxon>Streptophyta</taxon>
        <taxon>Embryophyta</taxon>
        <taxon>Tracheophyta</taxon>
        <taxon>Spermatophyta</taxon>
        <taxon>Magnoliopsida</taxon>
        <taxon>eudicotyledons</taxon>
        <taxon>Gunneridae</taxon>
        <taxon>Pentapetalae</taxon>
        <taxon>rosids</taxon>
        <taxon>malvids</taxon>
        <taxon>Brassicales</taxon>
        <taxon>Brassicaceae</taxon>
        <taxon>Camelineae</taxon>
        <taxon>Arabidopsis</taxon>
    </lineage>
</organism>